<feature type="chain" id="PRO_0000049676" description="Riboflavin transporter FmnP">
    <location>
        <begin position="1"/>
        <end position="190"/>
    </location>
</feature>
<feature type="topological domain" description="Extracellular" evidence="2">
    <location>
        <begin position="1"/>
        <end position="5"/>
    </location>
</feature>
<feature type="transmembrane region" description="Helical" evidence="2">
    <location>
        <begin position="6"/>
        <end position="26"/>
    </location>
</feature>
<feature type="topological domain" description="Cytoplasmic" evidence="2">
    <location>
        <begin position="27"/>
        <end position="39"/>
    </location>
</feature>
<feature type="transmembrane region" description="Helical" evidence="2">
    <location>
        <begin position="40"/>
        <end position="60"/>
    </location>
</feature>
<feature type="topological domain" description="Extracellular" evidence="2">
    <location>
        <begin position="61"/>
        <end position="76"/>
    </location>
</feature>
<feature type="transmembrane region" description="Helical" evidence="2">
    <location>
        <begin position="77"/>
        <end position="97"/>
    </location>
</feature>
<feature type="topological domain" description="Cytoplasmic" evidence="2">
    <location>
        <begin position="98"/>
        <end position="109"/>
    </location>
</feature>
<feature type="transmembrane region" description="Helical" evidence="2">
    <location>
        <begin position="110"/>
        <end position="130"/>
    </location>
</feature>
<feature type="topological domain" description="Extracellular" evidence="2">
    <location>
        <begin position="131"/>
        <end position="154"/>
    </location>
</feature>
<feature type="transmembrane region" description="Helical" evidence="2">
    <location>
        <begin position="155"/>
        <end position="175"/>
    </location>
</feature>
<feature type="topological domain" description="Cytoplasmic" evidence="2">
    <location>
        <begin position="176"/>
        <end position="190"/>
    </location>
</feature>
<accession>P50726</accession>
<reference key="1">
    <citation type="journal article" date="1996" name="Microbiology">
        <title>Sequence analysis of the Bacillus subtilis chromosome region between the serA and kdg loci cloned in a yeast artificial chromosome.</title>
        <authorList>
            <person name="Sorokin A.V."/>
            <person name="Azevedo V."/>
            <person name="Zumstein E."/>
            <person name="Galleron N."/>
            <person name="Ehrlich S.D."/>
            <person name="Serror P."/>
        </authorList>
    </citation>
    <scope>NUCLEOTIDE SEQUENCE [GENOMIC DNA]</scope>
    <source>
        <strain>168 / Marburg / ATCC 6051 / DSM 10 / JCM 1465 / NBRC 13719 / NCIMB 3610 / NRRL NRS-744 / VKM B-501</strain>
    </source>
</reference>
<reference key="2">
    <citation type="journal article" date="1997" name="Nature">
        <title>The complete genome sequence of the Gram-positive bacterium Bacillus subtilis.</title>
        <authorList>
            <person name="Kunst F."/>
            <person name="Ogasawara N."/>
            <person name="Moszer I."/>
            <person name="Albertini A.M."/>
            <person name="Alloni G."/>
            <person name="Azevedo V."/>
            <person name="Bertero M.G."/>
            <person name="Bessieres P."/>
            <person name="Bolotin A."/>
            <person name="Borchert S."/>
            <person name="Borriss R."/>
            <person name="Boursier L."/>
            <person name="Brans A."/>
            <person name="Braun M."/>
            <person name="Brignell S.C."/>
            <person name="Bron S."/>
            <person name="Brouillet S."/>
            <person name="Bruschi C.V."/>
            <person name="Caldwell B."/>
            <person name="Capuano V."/>
            <person name="Carter N.M."/>
            <person name="Choi S.-K."/>
            <person name="Codani J.-J."/>
            <person name="Connerton I.F."/>
            <person name="Cummings N.J."/>
            <person name="Daniel R.A."/>
            <person name="Denizot F."/>
            <person name="Devine K.M."/>
            <person name="Duesterhoeft A."/>
            <person name="Ehrlich S.D."/>
            <person name="Emmerson P.T."/>
            <person name="Entian K.-D."/>
            <person name="Errington J."/>
            <person name="Fabret C."/>
            <person name="Ferrari E."/>
            <person name="Foulger D."/>
            <person name="Fritz C."/>
            <person name="Fujita M."/>
            <person name="Fujita Y."/>
            <person name="Fuma S."/>
            <person name="Galizzi A."/>
            <person name="Galleron N."/>
            <person name="Ghim S.-Y."/>
            <person name="Glaser P."/>
            <person name="Goffeau A."/>
            <person name="Golightly E.J."/>
            <person name="Grandi G."/>
            <person name="Guiseppi G."/>
            <person name="Guy B.J."/>
            <person name="Haga K."/>
            <person name="Haiech J."/>
            <person name="Harwood C.R."/>
            <person name="Henaut A."/>
            <person name="Hilbert H."/>
            <person name="Holsappel S."/>
            <person name="Hosono S."/>
            <person name="Hullo M.-F."/>
            <person name="Itaya M."/>
            <person name="Jones L.-M."/>
            <person name="Joris B."/>
            <person name="Karamata D."/>
            <person name="Kasahara Y."/>
            <person name="Klaerr-Blanchard M."/>
            <person name="Klein C."/>
            <person name="Kobayashi Y."/>
            <person name="Koetter P."/>
            <person name="Koningstein G."/>
            <person name="Krogh S."/>
            <person name="Kumano M."/>
            <person name="Kurita K."/>
            <person name="Lapidus A."/>
            <person name="Lardinois S."/>
            <person name="Lauber J."/>
            <person name="Lazarevic V."/>
            <person name="Lee S.-M."/>
            <person name="Levine A."/>
            <person name="Liu H."/>
            <person name="Masuda S."/>
            <person name="Mauel C."/>
            <person name="Medigue C."/>
            <person name="Medina N."/>
            <person name="Mellado R.P."/>
            <person name="Mizuno M."/>
            <person name="Moestl D."/>
            <person name="Nakai S."/>
            <person name="Noback M."/>
            <person name="Noone D."/>
            <person name="O'Reilly M."/>
            <person name="Ogawa K."/>
            <person name="Ogiwara A."/>
            <person name="Oudega B."/>
            <person name="Park S.-H."/>
            <person name="Parro V."/>
            <person name="Pohl T.M."/>
            <person name="Portetelle D."/>
            <person name="Porwollik S."/>
            <person name="Prescott A.M."/>
            <person name="Presecan E."/>
            <person name="Pujic P."/>
            <person name="Purnelle B."/>
            <person name="Rapoport G."/>
            <person name="Rey M."/>
            <person name="Reynolds S."/>
            <person name="Rieger M."/>
            <person name="Rivolta C."/>
            <person name="Rocha E."/>
            <person name="Roche B."/>
            <person name="Rose M."/>
            <person name="Sadaie Y."/>
            <person name="Sato T."/>
            <person name="Scanlan E."/>
            <person name="Schleich S."/>
            <person name="Schroeter R."/>
            <person name="Scoffone F."/>
            <person name="Sekiguchi J."/>
            <person name="Sekowska A."/>
            <person name="Seror S.J."/>
            <person name="Serror P."/>
            <person name="Shin B.-S."/>
            <person name="Soldo B."/>
            <person name="Sorokin A."/>
            <person name="Tacconi E."/>
            <person name="Takagi T."/>
            <person name="Takahashi H."/>
            <person name="Takemaru K."/>
            <person name="Takeuchi M."/>
            <person name="Tamakoshi A."/>
            <person name="Tanaka T."/>
            <person name="Terpstra P."/>
            <person name="Tognoni A."/>
            <person name="Tosato V."/>
            <person name="Uchiyama S."/>
            <person name="Vandenbol M."/>
            <person name="Vannier F."/>
            <person name="Vassarotti A."/>
            <person name="Viari A."/>
            <person name="Wambutt R."/>
            <person name="Wedler E."/>
            <person name="Wedler H."/>
            <person name="Weitzenegger T."/>
            <person name="Winters P."/>
            <person name="Wipat A."/>
            <person name="Yamamoto H."/>
            <person name="Yamane K."/>
            <person name="Yasumoto K."/>
            <person name="Yata K."/>
            <person name="Yoshida K."/>
            <person name="Yoshikawa H.-F."/>
            <person name="Zumstein E."/>
            <person name="Yoshikawa H."/>
            <person name="Danchin A."/>
        </authorList>
    </citation>
    <scope>NUCLEOTIDE SEQUENCE [LARGE SCALE GENOMIC DNA]</scope>
    <source>
        <strain>168</strain>
    </source>
</reference>
<reference key="3">
    <citation type="journal article" date="2007" name="J. Bacteriol.">
        <title>Characterization of riboflavin (vitamin B2) transport proteins from Bacillus subtilis and Corynebacterium glutamicum.</title>
        <authorList>
            <person name="Vogl C."/>
            <person name="Grill S."/>
            <person name="Schilling O."/>
            <person name="Stulke J."/>
            <person name="Mack M."/>
            <person name="Stolz J."/>
        </authorList>
    </citation>
    <scope>FUNCTION AS A TRANSPORTER</scope>
    <scope>ACTIVITY REGULATION</scope>
    <scope>SUBCELLULAR LOCATION</scope>
    <scope>TOPOLOGY</scope>
    <scope>INDUCTION</scope>
    <source>
        <strain>168</strain>
    </source>
</reference>
<reference key="4">
    <citation type="journal article" date="2009" name="J. Bacteriol.">
        <title>A novel class of modular transporters for vitamins in prokaryotes.</title>
        <authorList>
            <person name="Rodionov D.A."/>
            <person name="Hebbeln P."/>
            <person name="Eudes A."/>
            <person name="ter Beek J."/>
            <person name="Rodionova I.A."/>
            <person name="Erkens G.B."/>
            <person name="Slotboom D.J."/>
            <person name="Gelfand M.S."/>
            <person name="Osterman A.L."/>
            <person name="Hanson A.D."/>
            <person name="Eitinger T."/>
        </authorList>
    </citation>
    <scope>SUBUNIT</scope>
    <scope>DISRUPTION PHENOTYPE</scope>
    <source>
        <strain>168</strain>
    </source>
</reference>
<dbReference type="EMBL" id="L47648">
    <property type="protein sequence ID" value="AAC83944.1"/>
    <property type="molecule type" value="Genomic_DNA"/>
</dbReference>
<dbReference type="EMBL" id="AL009126">
    <property type="protein sequence ID" value="CAB14237.1"/>
    <property type="molecule type" value="Genomic_DNA"/>
</dbReference>
<dbReference type="PIR" id="E69932">
    <property type="entry name" value="E69932"/>
</dbReference>
<dbReference type="RefSeq" id="NP_390186.1">
    <property type="nucleotide sequence ID" value="NC_000964.3"/>
</dbReference>
<dbReference type="RefSeq" id="WP_004399159.1">
    <property type="nucleotide sequence ID" value="NZ_OZ025638.1"/>
</dbReference>
<dbReference type="SMR" id="P50726"/>
<dbReference type="FunCoup" id="P50726">
    <property type="interactions" value="10"/>
</dbReference>
<dbReference type="STRING" id="224308.BSU23050"/>
<dbReference type="TCDB" id="2.A.87.1.2">
    <property type="family name" value="the prokaryotic riboflavin transporter (p-rft) family"/>
</dbReference>
<dbReference type="PaxDb" id="224308-BSU23050"/>
<dbReference type="EnsemblBacteria" id="CAB14237">
    <property type="protein sequence ID" value="CAB14237"/>
    <property type="gene ID" value="BSU_23050"/>
</dbReference>
<dbReference type="GeneID" id="938970"/>
<dbReference type="KEGG" id="bsu:BSU23050"/>
<dbReference type="PATRIC" id="fig|224308.179.peg.2512"/>
<dbReference type="eggNOG" id="COG3601">
    <property type="taxonomic scope" value="Bacteria"/>
</dbReference>
<dbReference type="InParanoid" id="P50726"/>
<dbReference type="OrthoDB" id="9809216at2"/>
<dbReference type="PhylomeDB" id="P50726"/>
<dbReference type="BioCyc" id="BSUB:BSU23050-MONOMER"/>
<dbReference type="Proteomes" id="UP000001570">
    <property type="component" value="Chromosome"/>
</dbReference>
<dbReference type="GO" id="GO:0005886">
    <property type="term" value="C:plasma membrane"/>
    <property type="evidence" value="ECO:0000318"/>
    <property type="project" value="GO_Central"/>
</dbReference>
<dbReference type="GO" id="GO:0032217">
    <property type="term" value="F:riboflavin transmembrane transporter activity"/>
    <property type="evidence" value="ECO:0000318"/>
    <property type="project" value="GO_Central"/>
</dbReference>
<dbReference type="GO" id="GO:0032218">
    <property type="term" value="P:riboflavin transport"/>
    <property type="evidence" value="ECO:0000318"/>
    <property type="project" value="GO_Central"/>
</dbReference>
<dbReference type="FunFam" id="1.10.1760.20:FF:000003">
    <property type="entry name" value="Riboflavin transporter"/>
    <property type="match status" value="1"/>
</dbReference>
<dbReference type="Gene3D" id="1.10.1760.20">
    <property type="match status" value="1"/>
</dbReference>
<dbReference type="InterPro" id="IPR024529">
    <property type="entry name" value="ECF_trnsprt_substrate-spec"/>
</dbReference>
<dbReference type="InterPro" id="IPR025720">
    <property type="entry name" value="RibU"/>
</dbReference>
<dbReference type="PANTHER" id="PTHR38438">
    <property type="entry name" value="RIBOFLAVIN TRANSPORTER RIBU"/>
    <property type="match status" value="1"/>
</dbReference>
<dbReference type="PANTHER" id="PTHR38438:SF1">
    <property type="entry name" value="RIBOFLAVIN TRANSPORTER RIBU"/>
    <property type="match status" value="1"/>
</dbReference>
<dbReference type="Pfam" id="PF12822">
    <property type="entry name" value="ECF_trnsprt"/>
    <property type="match status" value="1"/>
</dbReference>
<dbReference type="PIRSF" id="PIRSF037778">
    <property type="entry name" value="UCP037778_transp_RibU"/>
    <property type="match status" value="1"/>
</dbReference>
<evidence type="ECO:0000250" key="1"/>
<evidence type="ECO:0000255" key="2"/>
<evidence type="ECO:0000269" key="3">
    <source>
    </source>
</evidence>
<evidence type="ECO:0000269" key="4">
    <source>
    </source>
</evidence>
<evidence type="ECO:0000305" key="5"/>
<name>FMNP_BACSU</name>
<gene>
    <name type="primary">fmnP</name>
    <name type="synonym">ribU</name>
    <name type="synonym">ypaA</name>
    <name type="ordered locus">BSU23050</name>
</gene>
<keyword id="KW-1003">Cell membrane</keyword>
<keyword id="KW-0472">Membrane</keyword>
<keyword id="KW-1185">Reference proteome</keyword>
<keyword id="KW-0812">Transmembrane</keyword>
<keyword id="KW-1133">Transmembrane helix</keyword>
<keyword id="KW-0813">Transport</keyword>
<protein>
    <recommendedName>
        <fullName>Riboflavin transporter FmnP</fullName>
    </recommendedName>
    <alternativeName>
        <fullName>FMN permease</fullName>
    </alternativeName>
    <alternativeName>
        <fullName>Riboflavin ECF transporter S component FmnP</fullName>
    </alternativeName>
</protein>
<organism>
    <name type="scientific">Bacillus subtilis (strain 168)</name>
    <dbReference type="NCBI Taxonomy" id="224308"/>
    <lineage>
        <taxon>Bacteria</taxon>
        <taxon>Bacillati</taxon>
        <taxon>Bacillota</taxon>
        <taxon>Bacilli</taxon>
        <taxon>Bacillales</taxon>
        <taxon>Bacillaceae</taxon>
        <taxon>Bacillus</taxon>
    </lineage>
</organism>
<proteinExistence type="evidence at protein level"/>
<sequence>MKVKKLVVVSMLSSIAFVLMLLNFPFPGLPDYLKIDFSDVPAIIAILIYGPLAGIAVEAIKNVLQYIIQGSMAGVPVGQVANFIAGTLFILPTAFLFKKLNSAKGLAVSLLLGTAAMTILMSILNYVLILPAYTWFLHSPALSDSALKTAVVAGILPFNMIKGIVITVVFSLIFIKLKPWIEQQRSAHIH</sequence>
<comment type="function">
    <text evidence="1 3">Mediates uptake of riboflavin and roseoflavin, a toxic riboflavin analog; may also transport FMN. Probably a riboflavin-binding protein that interacts with the energy-coupling factor (ECF) ABC-transporter complex. Unlike classic ABC transporters this ECF transporter provides the energy necessary to transport a number of different substrates. The substrates themselves are bound by transmembrane, not extracytoplasmic soluble proteins (By similarity).</text>
</comment>
<comment type="activity regulation">
    <text evidence="3">Inhibited by excess of riboflavin or FMN. Also inhibited by protonophores such as CCCP and FCCP or in the absence of glucose.</text>
</comment>
<comment type="subunit">
    <text evidence="1">Forms a stable energy-coupling factor (ECF) transporter complex composed of a membrane-embedded substrate-binding protein (S component), 2 ATP-binding proteins (A component) and 2 transmembrane proteins (T component). May be able to interact with more than 1 S component at a time (By similarity).</text>
</comment>
<comment type="subcellular location">
    <subcellularLocation>
        <location evidence="3">Cell membrane</location>
        <topology evidence="3">Multi-pass membrane protein</topology>
    </subcellularLocation>
</comment>
<comment type="induction">
    <text evidence="3">Induced by riboflavin deficiency.</text>
</comment>
<comment type="disruption phenotype">
    <text evidence="4">Abolishes riboflavin uptake, cell growth less inhibited by roseoflavin.</text>
</comment>
<comment type="similarity">
    <text evidence="5">Belongs to the prokaryotic riboflavin transporter (P-RFT) (TC 2.A.87) family.</text>
</comment>